<comment type="catalytic activity">
    <reaction evidence="1">
        <text>tRNA(Phe) + L-phenylalanine + ATP = L-phenylalanyl-tRNA(Phe) + AMP + diphosphate + H(+)</text>
        <dbReference type="Rhea" id="RHEA:19413"/>
        <dbReference type="Rhea" id="RHEA-COMP:9668"/>
        <dbReference type="Rhea" id="RHEA-COMP:9699"/>
        <dbReference type="ChEBI" id="CHEBI:15378"/>
        <dbReference type="ChEBI" id="CHEBI:30616"/>
        <dbReference type="ChEBI" id="CHEBI:33019"/>
        <dbReference type="ChEBI" id="CHEBI:58095"/>
        <dbReference type="ChEBI" id="CHEBI:78442"/>
        <dbReference type="ChEBI" id="CHEBI:78531"/>
        <dbReference type="ChEBI" id="CHEBI:456215"/>
        <dbReference type="EC" id="6.1.1.20"/>
    </reaction>
</comment>
<comment type="cofactor">
    <cofactor evidence="1">
        <name>Mg(2+)</name>
        <dbReference type="ChEBI" id="CHEBI:18420"/>
    </cofactor>
    <text evidence="1">Binds 2 magnesium ions per tetramer.</text>
</comment>
<comment type="subunit">
    <text evidence="1">Tetramer of two alpha and two beta subunits.</text>
</comment>
<comment type="subcellular location">
    <subcellularLocation>
        <location>Cytoplasm</location>
    </subcellularLocation>
</comment>
<comment type="similarity">
    <text evidence="1">Belongs to the phenylalanyl-tRNA synthetase beta subunit family. Type 1 subfamily.</text>
</comment>
<gene>
    <name evidence="1" type="primary">pheT</name>
    <name type="ordered locus">SAUSA300_1038</name>
</gene>
<protein>
    <recommendedName>
        <fullName evidence="1">Phenylalanine--tRNA ligase beta subunit</fullName>
        <ecNumber evidence="1">6.1.1.20</ecNumber>
    </recommendedName>
    <alternativeName>
        <fullName evidence="1">Phenylalanyl-tRNA synthetase beta subunit</fullName>
        <shortName evidence="1">PheRS</shortName>
    </alternativeName>
</protein>
<evidence type="ECO:0000255" key="1">
    <source>
        <dbReference type="HAMAP-Rule" id="MF_00283"/>
    </source>
</evidence>
<name>SYFB_STAA3</name>
<organism>
    <name type="scientific">Staphylococcus aureus (strain USA300)</name>
    <dbReference type="NCBI Taxonomy" id="367830"/>
    <lineage>
        <taxon>Bacteria</taxon>
        <taxon>Bacillati</taxon>
        <taxon>Bacillota</taxon>
        <taxon>Bacilli</taxon>
        <taxon>Bacillales</taxon>
        <taxon>Staphylococcaceae</taxon>
        <taxon>Staphylococcus</taxon>
    </lineage>
</organism>
<dbReference type="EC" id="6.1.1.20" evidence="1"/>
<dbReference type="EMBL" id="CP000255">
    <property type="protein sequence ID" value="ABD22106.1"/>
    <property type="molecule type" value="Genomic_DNA"/>
</dbReference>
<dbReference type="RefSeq" id="WP_000908981.1">
    <property type="nucleotide sequence ID" value="NZ_CP027476.1"/>
</dbReference>
<dbReference type="SMR" id="Q2FHU2"/>
<dbReference type="KEGG" id="saa:SAUSA300_1038"/>
<dbReference type="HOGENOM" id="CLU_016891_0_0_9"/>
<dbReference type="OMA" id="PSPLWMQ"/>
<dbReference type="Proteomes" id="UP000001939">
    <property type="component" value="Chromosome"/>
</dbReference>
<dbReference type="GO" id="GO:0009328">
    <property type="term" value="C:phenylalanine-tRNA ligase complex"/>
    <property type="evidence" value="ECO:0007669"/>
    <property type="project" value="TreeGrafter"/>
</dbReference>
<dbReference type="GO" id="GO:0005524">
    <property type="term" value="F:ATP binding"/>
    <property type="evidence" value="ECO:0007669"/>
    <property type="project" value="UniProtKB-UniRule"/>
</dbReference>
<dbReference type="GO" id="GO:0140096">
    <property type="term" value="F:catalytic activity, acting on a protein"/>
    <property type="evidence" value="ECO:0007669"/>
    <property type="project" value="UniProtKB-ARBA"/>
</dbReference>
<dbReference type="GO" id="GO:0000287">
    <property type="term" value="F:magnesium ion binding"/>
    <property type="evidence" value="ECO:0007669"/>
    <property type="project" value="UniProtKB-UniRule"/>
</dbReference>
<dbReference type="GO" id="GO:0004826">
    <property type="term" value="F:phenylalanine-tRNA ligase activity"/>
    <property type="evidence" value="ECO:0007669"/>
    <property type="project" value="UniProtKB-UniRule"/>
</dbReference>
<dbReference type="GO" id="GO:0016740">
    <property type="term" value="F:transferase activity"/>
    <property type="evidence" value="ECO:0007669"/>
    <property type="project" value="UniProtKB-ARBA"/>
</dbReference>
<dbReference type="GO" id="GO:0000049">
    <property type="term" value="F:tRNA binding"/>
    <property type="evidence" value="ECO:0007669"/>
    <property type="project" value="UniProtKB-KW"/>
</dbReference>
<dbReference type="GO" id="GO:0006432">
    <property type="term" value="P:phenylalanyl-tRNA aminoacylation"/>
    <property type="evidence" value="ECO:0007669"/>
    <property type="project" value="UniProtKB-UniRule"/>
</dbReference>
<dbReference type="CDD" id="cd00769">
    <property type="entry name" value="PheRS_beta_core"/>
    <property type="match status" value="1"/>
</dbReference>
<dbReference type="CDD" id="cd02796">
    <property type="entry name" value="tRNA_bind_bactPheRS"/>
    <property type="match status" value="1"/>
</dbReference>
<dbReference type="FunFam" id="2.40.50.140:FF:000045">
    <property type="entry name" value="Phenylalanine--tRNA ligase beta subunit"/>
    <property type="match status" value="1"/>
</dbReference>
<dbReference type="FunFam" id="3.30.56.10:FF:000002">
    <property type="entry name" value="Phenylalanine--tRNA ligase beta subunit"/>
    <property type="match status" value="1"/>
</dbReference>
<dbReference type="FunFam" id="3.30.70.380:FF:000001">
    <property type="entry name" value="Phenylalanine--tRNA ligase beta subunit"/>
    <property type="match status" value="1"/>
</dbReference>
<dbReference type="FunFam" id="3.30.930.10:FF:000022">
    <property type="entry name" value="Phenylalanine--tRNA ligase beta subunit"/>
    <property type="match status" value="1"/>
</dbReference>
<dbReference type="FunFam" id="3.50.40.10:FF:000001">
    <property type="entry name" value="Phenylalanine--tRNA ligase beta subunit"/>
    <property type="match status" value="1"/>
</dbReference>
<dbReference type="Gene3D" id="3.30.56.10">
    <property type="match status" value="2"/>
</dbReference>
<dbReference type="Gene3D" id="3.30.930.10">
    <property type="entry name" value="Bira Bifunctional Protein, Domain 2"/>
    <property type="match status" value="1"/>
</dbReference>
<dbReference type="Gene3D" id="3.30.70.380">
    <property type="entry name" value="Ferrodoxin-fold anticodon-binding domain"/>
    <property type="match status" value="1"/>
</dbReference>
<dbReference type="Gene3D" id="2.40.50.140">
    <property type="entry name" value="Nucleic acid-binding proteins"/>
    <property type="match status" value="1"/>
</dbReference>
<dbReference type="Gene3D" id="3.50.40.10">
    <property type="entry name" value="Phenylalanyl-trna Synthetase, Chain B, domain 3"/>
    <property type="match status" value="1"/>
</dbReference>
<dbReference type="HAMAP" id="MF_00283">
    <property type="entry name" value="Phe_tRNA_synth_beta1"/>
    <property type="match status" value="1"/>
</dbReference>
<dbReference type="InterPro" id="IPR045864">
    <property type="entry name" value="aa-tRNA-synth_II/BPL/LPL"/>
</dbReference>
<dbReference type="InterPro" id="IPR005146">
    <property type="entry name" value="B3/B4_tRNA-bd"/>
</dbReference>
<dbReference type="InterPro" id="IPR009061">
    <property type="entry name" value="DNA-bd_dom_put_sf"/>
</dbReference>
<dbReference type="InterPro" id="IPR005121">
    <property type="entry name" value="Fdx_antiC-bd"/>
</dbReference>
<dbReference type="InterPro" id="IPR036690">
    <property type="entry name" value="Fdx_antiC-bd_sf"/>
</dbReference>
<dbReference type="InterPro" id="IPR012340">
    <property type="entry name" value="NA-bd_OB-fold"/>
</dbReference>
<dbReference type="InterPro" id="IPR045060">
    <property type="entry name" value="Phe-tRNA-ligase_IIc_bsu"/>
</dbReference>
<dbReference type="InterPro" id="IPR004532">
    <property type="entry name" value="Phe-tRNA-ligase_IIc_bsu_bact"/>
</dbReference>
<dbReference type="InterPro" id="IPR020825">
    <property type="entry name" value="Phe-tRNA_synthase-like_B3/B4"/>
</dbReference>
<dbReference type="InterPro" id="IPR041616">
    <property type="entry name" value="PheRS_beta_core"/>
</dbReference>
<dbReference type="InterPro" id="IPR002547">
    <property type="entry name" value="tRNA-bd_dom"/>
</dbReference>
<dbReference type="InterPro" id="IPR033714">
    <property type="entry name" value="tRNA_bind_bactPheRS"/>
</dbReference>
<dbReference type="InterPro" id="IPR005147">
    <property type="entry name" value="tRNA_synthase_B5-dom"/>
</dbReference>
<dbReference type="NCBIfam" id="TIGR00472">
    <property type="entry name" value="pheT_bact"/>
    <property type="match status" value="1"/>
</dbReference>
<dbReference type="NCBIfam" id="NF045760">
    <property type="entry name" value="YtpR"/>
    <property type="match status" value="1"/>
</dbReference>
<dbReference type="PANTHER" id="PTHR10947:SF0">
    <property type="entry name" value="PHENYLALANINE--TRNA LIGASE BETA SUBUNIT"/>
    <property type="match status" value="1"/>
</dbReference>
<dbReference type="PANTHER" id="PTHR10947">
    <property type="entry name" value="PHENYLALANYL-TRNA SYNTHETASE BETA CHAIN AND LEUCINE-RICH REPEAT-CONTAINING PROTEIN 47"/>
    <property type="match status" value="1"/>
</dbReference>
<dbReference type="Pfam" id="PF03483">
    <property type="entry name" value="B3_4"/>
    <property type="match status" value="1"/>
</dbReference>
<dbReference type="Pfam" id="PF03484">
    <property type="entry name" value="B5"/>
    <property type="match status" value="1"/>
</dbReference>
<dbReference type="Pfam" id="PF03147">
    <property type="entry name" value="FDX-ACB"/>
    <property type="match status" value="1"/>
</dbReference>
<dbReference type="Pfam" id="PF01588">
    <property type="entry name" value="tRNA_bind"/>
    <property type="match status" value="1"/>
</dbReference>
<dbReference type="Pfam" id="PF17759">
    <property type="entry name" value="tRNA_synthFbeta"/>
    <property type="match status" value="1"/>
</dbReference>
<dbReference type="SMART" id="SM00873">
    <property type="entry name" value="B3_4"/>
    <property type="match status" value="1"/>
</dbReference>
<dbReference type="SMART" id="SM00874">
    <property type="entry name" value="B5"/>
    <property type="match status" value="1"/>
</dbReference>
<dbReference type="SMART" id="SM00896">
    <property type="entry name" value="FDX-ACB"/>
    <property type="match status" value="1"/>
</dbReference>
<dbReference type="SUPFAM" id="SSF54991">
    <property type="entry name" value="Anticodon-binding domain of PheRS"/>
    <property type="match status" value="1"/>
</dbReference>
<dbReference type="SUPFAM" id="SSF55681">
    <property type="entry name" value="Class II aaRS and biotin synthetases"/>
    <property type="match status" value="1"/>
</dbReference>
<dbReference type="SUPFAM" id="SSF50249">
    <property type="entry name" value="Nucleic acid-binding proteins"/>
    <property type="match status" value="1"/>
</dbReference>
<dbReference type="SUPFAM" id="SSF56037">
    <property type="entry name" value="PheT/TilS domain"/>
    <property type="match status" value="1"/>
</dbReference>
<dbReference type="SUPFAM" id="SSF46955">
    <property type="entry name" value="Putative DNA-binding domain"/>
    <property type="match status" value="1"/>
</dbReference>
<dbReference type="PROSITE" id="PS51483">
    <property type="entry name" value="B5"/>
    <property type="match status" value="1"/>
</dbReference>
<dbReference type="PROSITE" id="PS51447">
    <property type="entry name" value="FDX_ACB"/>
    <property type="match status" value="1"/>
</dbReference>
<dbReference type="PROSITE" id="PS50886">
    <property type="entry name" value="TRBD"/>
    <property type="match status" value="1"/>
</dbReference>
<proteinExistence type="inferred from homology"/>
<sequence>MLISNEWLKEYVTIDDSVSNLAERITRTGIEVDDLIDYTKDIKNLVVGFVKSKEKHPDADKLNVCQVDIGEDEPVQIVCGAPNVDAGQYVIVAKVGGRLPGGIKIKRAKLRGERSEGMICSLQEIGISSNYIPKSFESGIYVFSEAQVPGTDALQALYLDDQVMEFDLTPNRADALSMIGTAYEVAALYNTKMTKPETTSNELDLSANDELTVTIENEDKVPYYSARVVHDVTIEPSPIWMQARLIKAGIRPINNVVDISNYVLLEYGQPLHMFDQDAIGSQQIVVRQANEGEKMTTLDDTERELLTSDIVITNGQTPIALAGVMGGDFSEVKEQTSNIVIEGAIFDPVSIRHTSRRLNLRSESSSRFEKGIATEFVDEAVDRACYLLQTYANGKVLKDRVSSGELGAFITPIDITADKINRTIGFDLSQNDIVTIFNQLGFDTEINDDVITVLVPSRRKDITIKEDLIEEVARIYGYDDIPSTLPVFDKVTSGQLTDRQYKTRMVKEVLEGAGLDQAITYSLVSKEDATAFSMQQRQTIDLLMPMSEAHASLRQSLLPHLIEAASYNVARKNKDVKLFEIGNVFFANGEGELPDQVEYLSGILTGDYVVNQWQDKKETVDFYLAKGVVDRVSEKLNLEFSYRRADIDGLHPGRTAEILLENKVVGFIGELHPILAADNDLKRTYVFELNFDALMAVSVGYINYQPIPRFPGMSRDIALEVDQNIPAADLLSTIHAHGGNILKDTLVFDVYQGEHLEKGKKSIAIRLNYLDTEETLTDERVSKVQAEIEAALIEQGAVIR</sequence>
<keyword id="KW-0030">Aminoacyl-tRNA synthetase</keyword>
<keyword id="KW-0067">ATP-binding</keyword>
<keyword id="KW-0963">Cytoplasm</keyword>
<keyword id="KW-0436">Ligase</keyword>
<keyword id="KW-0460">Magnesium</keyword>
<keyword id="KW-0479">Metal-binding</keyword>
<keyword id="KW-0547">Nucleotide-binding</keyword>
<keyword id="KW-0648">Protein biosynthesis</keyword>
<keyword id="KW-0694">RNA-binding</keyword>
<keyword id="KW-0820">tRNA-binding</keyword>
<accession>Q2FHU2</accession>
<reference key="1">
    <citation type="journal article" date="2006" name="Lancet">
        <title>Complete genome sequence of USA300, an epidemic clone of community-acquired meticillin-resistant Staphylococcus aureus.</title>
        <authorList>
            <person name="Diep B.A."/>
            <person name="Gill S.R."/>
            <person name="Chang R.F."/>
            <person name="Phan T.H."/>
            <person name="Chen J.H."/>
            <person name="Davidson M.G."/>
            <person name="Lin F."/>
            <person name="Lin J."/>
            <person name="Carleton H.A."/>
            <person name="Mongodin E.F."/>
            <person name="Sensabaugh G.F."/>
            <person name="Perdreau-Remington F."/>
        </authorList>
    </citation>
    <scope>NUCLEOTIDE SEQUENCE [LARGE SCALE GENOMIC DNA]</scope>
    <source>
        <strain>USA300</strain>
    </source>
</reference>
<feature type="chain" id="PRO_0000232821" description="Phenylalanine--tRNA ligase beta subunit">
    <location>
        <begin position="1"/>
        <end position="800"/>
    </location>
</feature>
<feature type="domain" description="tRNA-binding" evidence="1">
    <location>
        <begin position="39"/>
        <end position="154"/>
    </location>
</feature>
<feature type="domain" description="B5" evidence="1">
    <location>
        <begin position="408"/>
        <end position="483"/>
    </location>
</feature>
<feature type="domain" description="FDX-ACB" evidence="1">
    <location>
        <begin position="708"/>
        <end position="800"/>
    </location>
</feature>
<feature type="binding site" evidence="1">
    <location>
        <position position="461"/>
    </location>
    <ligand>
        <name>Mg(2+)</name>
        <dbReference type="ChEBI" id="CHEBI:18420"/>
        <note>shared with alpha subunit</note>
    </ligand>
</feature>
<feature type="binding site" evidence="1">
    <location>
        <position position="467"/>
    </location>
    <ligand>
        <name>Mg(2+)</name>
        <dbReference type="ChEBI" id="CHEBI:18420"/>
        <note>shared with alpha subunit</note>
    </ligand>
</feature>
<feature type="binding site" evidence="1">
    <location>
        <position position="470"/>
    </location>
    <ligand>
        <name>Mg(2+)</name>
        <dbReference type="ChEBI" id="CHEBI:18420"/>
        <note>shared with alpha subunit</note>
    </ligand>
</feature>
<feature type="binding site" evidence="1">
    <location>
        <position position="471"/>
    </location>
    <ligand>
        <name>Mg(2+)</name>
        <dbReference type="ChEBI" id="CHEBI:18420"/>
        <note>shared with alpha subunit</note>
    </ligand>
</feature>